<feature type="signal peptide" evidence="5">
    <location>
        <begin position="1"/>
        <end position="24"/>
    </location>
</feature>
<feature type="chain" id="PRO_0000032542" description="Secreted frizzled-related protein 2">
    <location>
        <begin position="25"/>
        <end position="295"/>
    </location>
</feature>
<feature type="domain" description="FZ" evidence="2">
    <location>
        <begin position="35"/>
        <end position="155"/>
    </location>
</feature>
<feature type="domain" description="NTR" evidence="3">
    <location>
        <begin position="172"/>
        <end position="295"/>
    </location>
</feature>
<feature type="disulfide bond" evidence="1">
    <location>
        <begin position="40"/>
        <end position="103"/>
    </location>
</feature>
<feature type="disulfide bond" evidence="1">
    <location>
        <begin position="50"/>
        <end position="96"/>
    </location>
</feature>
<feature type="disulfide bond" evidence="1">
    <location>
        <begin position="87"/>
        <end position="125"/>
    </location>
</feature>
<feature type="disulfide bond" evidence="1">
    <location>
        <begin position="114"/>
        <end position="152"/>
    </location>
</feature>
<feature type="disulfide bond" evidence="1">
    <location>
        <begin position="118"/>
        <end position="142"/>
    </location>
</feature>
<feature type="disulfide bond" evidence="1">
    <location>
        <begin position="172"/>
        <end position="245"/>
    </location>
</feature>
<feature type="disulfide bond" evidence="1">
    <location>
        <begin position="175"/>
        <end position="247"/>
    </location>
</feature>
<feature type="disulfide bond" evidence="1">
    <location>
        <begin position="190"/>
        <end position="295"/>
    </location>
</feature>
<feature type="sequence variant" id="VAR_051963" description="In dbSNP:rs4643790." evidence="4 6">
    <original>A</original>
    <variation>V</variation>
    <location>
        <position position="45"/>
    </location>
</feature>
<feature type="sequence conflict" description="In Ref. 7; AAB70792." evidence="9" ref="7">
    <location>
        <begin position="132"/>
        <end position="133"/>
    </location>
</feature>
<name>SFRP2_HUMAN</name>
<sequence>MLQGPGSLLLLFLASHCCLGSARGLFLFGQPDFSYKRSNCKPIPANLQLCHGIEYQNMRLPNLLGHETMKEVLEQAGAWIPLVMKQCHPDTKKFLCSLFAPVCLDDLDETIQPCHSLCVQVKDRCAPVMSAFGFPWPDMLECDRFPQDNDLCIPLASSDHLLPATEEAPKVCEACKNKNDDDNDIMETLCKNDFALKIKVKEITYINRDTKIILETKSKTIYKLNGVSERDLKKSVLWLKDSLQCTCEEMNDINAPYLVMGQKQGGELVITSVKRWQKGQREFKRISRSIRKLQC</sequence>
<protein>
    <recommendedName>
        <fullName>Secreted frizzled-related protein 2</fullName>
        <shortName>FRP-2</shortName>
        <shortName>sFRP-2</shortName>
    </recommendedName>
    <alternativeName>
        <fullName>Secreted apoptosis-related protein 1</fullName>
        <shortName>SARP-1</shortName>
    </alternativeName>
</protein>
<proteinExistence type="evidence at protein level"/>
<keyword id="KW-0217">Developmental protein</keyword>
<keyword id="KW-0221">Differentiation</keyword>
<keyword id="KW-0903">Direct protein sequencing</keyword>
<keyword id="KW-1015">Disulfide bond</keyword>
<keyword id="KW-1267">Proteomics identification</keyword>
<keyword id="KW-1185">Reference proteome</keyword>
<keyword id="KW-0964">Secreted</keyword>
<keyword id="KW-0732">Signal</keyword>
<keyword id="KW-0879">Wnt signaling pathway</keyword>
<accession>Q96HF1</accession>
<accession>B3KQR2</accession>
<accession>O14778</accession>
<accession>Q9HAP5</accession>
<dbReference type="EMBL" id="AF311912">
    <property type="protein sequence ID" value="AAG24923.1"/>
    <property type="molecule type" value="mRNA"/>
</dbReference>
<dbReference type="EMBL" id="AY359001">
    <property type="protein sequence ID" value="AAQ89360.1"/>
    <property type="molecule type" value="mRNA"/>
</dbReference>
<dbReference type="EMBL" id="AK075372">
    <property type="protein sequence ID" value="BAG52124.1"/>
    <property type="molecule type" value="mRNA"/>
</dbReference>
<dbReference type="EMBL" id="CH471056">
    <property type="protein sequence ID" value="EAX04949.1"/>
    <property type="molecule type" value="Genomic_DNA"/>
</dbReference>
<dbReference type="EMBL" id="BC008666">
    <property type="protein sequence ID" value="AAH08666.1"/>
    <property type="molecule type" value="mRNA"/>
</dbReference>
<dbReference type="EMBL" id="AF017986">
    <property type="protein sequence ID" value="AAB70792.1"/>
    <property type="molecule type" value="mRNA"/>
</dbReference>
<dbReference type="CCDS" id="CCDS34082.1"/>
<dbReference type="PIR" id="JE0174">
    <property type="entry name" value="JE0174"/>
</dbReference>
<dbReference type="RefSeq" id="NP_003004.1">
    <property type="nucleotide sequence ID" value="NM_003013.3"/>
</dbReference>
<dbReference type="SMR" id="Q96HF1"/>
<dbReference type="BioGRID" id="112321">
    <property type="interactions" value="25"/>
</dbReference>
<dbReference type="FunCoup" id="Q96HF1">
    <property type="interactions" value="284"/>
</dbReference>
<dbReference type="IntAct" id="Q96HF1">
    <property type="interactions" value="17"/>
</dbReference>
<dbReference type="MINT" id="Q96HF1"/>
<dbReference type="STRING" id="9606.ENSP00000274063"/>
<dbReference type="MEROPS" id="I93.002"/>
<dbReference type="iPTMnet" id="Q96HF1"/>
<dbReference type="PhosphoSitePlus" id="Q96HF1"/>
<dbReference type="BioMuta" id="SFRP2"/>
<dbReference type="DMDM" id="61216828"/>
<dbReference type="jPOST" id="Q96HF1"/>
<dbReference type="MassIVE" id="Q96HF1"/>
<dbReference type="PaxDb" id="9606-ENSP00000274063"/>
<dbReference type="PeptideAtlas" id="Q96HF1"/>
<dbReference type="ProteomicsDB" id="76742"/>
<dbReference type="Antibodypedia" id="983">
    <property type="antibodies" value="357 antibodies from 37 providers"/>
</dbReference>
<dbReference type="DNASU" id="6423"/>
<dbReference type="Ensembl" id="ENST00000274063.5">
    <property type="protein sequence ID" value="ENSP00000274063.4"/>
    <property type="gene ID" value="ENSG00000145423.5"/>
</dbReference>
<dbReference type="GeneID" id="6423"/>
<dbReference type="KEGG" id="hsa:6423"/>
<dbReference type="MANE-Select" id="ENST00000274063.5">
    <property type="protein sequence ID" value="ENSP00000274063.4"/>
    <property type="RefSeq nucleotide sequence ID" value="NM_003013.3"/>
    <property type="RefSeq protein sequence ID" value="NP_003004.1"/>
</dbReference>
<dbReference type="UCSC" id="uc003inv.2">
    <property type="organism name" value="human"/>
</dbReference>
<dbReference type="AGR" id="HGNC:10777"/>
<dbReference type="CTD" id="6423"/>
<dbReference type="DisGeNET" id="6423"/>
<dbReference type="GeneCards" id="SFRP2"/>
<dbReference type="HGNC" id="HGNC:10777">
    <property type="gene designation" value="SFRP2"/>
</dbReference>
<dbReference type="HPA" id="ENSG00000145423">
    <property type="expression patterns" value="Tissue enhanced (gallbladder, urinary bladder)"/>
</dbReference>
<dbReference type="MIM" id="604157">
    <property type="type" value="gene"/>
</dbReference>
<dbReference type="neXtProt" id="NX_Q96HF1"/>
<dbReference type="OpenTargets" id="ENSG00000145423"/>
<dbReference type="PharmGKB" id="PA35693"/>
<dbReference type="VEuPathDB" id="HostDB:ENSG00000145423"/>
<dbReference type="eggNOG" id="KOG3577">
    <property type="taxonomic scope" value="Eukaryota"/>
</dbReference>
<dbReference type="GeneTree" id="ENSGT00940000156432"/>
<dbReference type="HOGENOM" id="CLU_054647_0_0_1"/>
<dbReference type="InParanoid" id="Q96HF1"/>
<dbReference type="OMA" id="NFGQHDL"/>
<dbReference type="OrthoDB" id="5985572at2759"/>
<dbReference type="PAN-GO" id="Q96HF1">
    <property type="GO annotations" value="5 GO annotations based on evolutionary models"/>
</dbReference>
<dbReference type="PhylomeDB" id="Q96HF1"/>
<dbReference type="TreeFam" id="TF350133"/>
<dbReference type="PathwayCommons" id="Q96HF1"/>
<dbReference type="Reactome" id="R-HSA-201681">
    <property type="pathway name" value="TCF dependent signaling in response to WNT"/>
</dbReference>
<dbReference type="Reactome" id="R-HSA-3772470">
    <property type="pathway name" value="Negative regulation of TCF-dependent signaling by WNT ligand antagonists"/>
</dbReference>
<dbReference type="SignaLink" id="Q96HF1"/>
<dbReference type="BioGRID-ORCS" id="6423">
    <property type="hits" value="13 hits in 1144 CRISPR screens"/>
</dbReference>
<dbReference type="ChiTaRS" id="SFRP2">
    <property type="organism name" value="human"/>
</dbReference>
<dbReference type="GeneWiki" id="SFRP2"/>
<dbReference type="GenomeRNAi" id="6423"/>
<dbReference type="Pharos" id="Q96HF1">
    <property type="development level" value="Tbio"/>
</dbReference>
<dbReference type="PRO" id="PR:Q96HF1"/>
<dbReference type="Proteomes" id="UP000005640">
    <property type="component" value="Chromosome 4"/>
</dbReference>
<dbReference type="RNAct" id="Q96HF1">
    <property type="molecule type" value="protein"/>
</dbReference>
<dbReference type="Bgee" id="ENSG00000145423">
    <property type="expression patterns" value="Expressed in upper arm skin and 158 other cell types or tissues"/>
</dbReference>
<dbReference type="ExpressionAtlas" id="Q96HF1">
    <property type="expression patterns" value="baseline and differential"/>
</dbReference>
<dbReference type="GO" id="GO:0062023">
    <property type="term" value="C:collagen-containing extracellular matrix"/>
    <property type="evidence" value="ECO:0000250"/>
    <property type="project" value="BHF-UCL"/>
</dbReference>
<dbReference type="GO" id="GO:0005615">
    <property type="term" value="C:extracellular space"/>
    <property type="evidence" value="ECO:0000314"/>
    <property type="project" value="UniProtKB"/>
</dbReference>
<dbReference type="GO" id="GO:0061133">
    <property type="term" value="F:endopeptidase activator activity"/>
    <property type="evidence" value="ECO:0007669"/>
    <property type="project" value="Ensembl"/>
</dbReference>
<dbReference type="GO" id="GO:0001968">
    <property type="term" value="F:fibronectin binding"/>
    <property type="evidence" value="ECO:0000250"/>
    <property type="project" value="BHF-UCL"/>
</dbReference>
<dbReference type="GO" id="GO:0005178">
    <property type="term" value="F:integrin binding"/>
    <property type="evidence" value="ECO:0000250"/>
    <property type="project" value="BHF-UCL"/>
</dbReference>
<dbReference type="GO" id="GO:0048018">
    <property type="term" value="F:receptor ligand activity"/>
    <property type="evidence" value="ECO:0000250"/>
    <property type="project" value="BHF-UCL"/>
</dbReference>
<dbReference type="GO" id="GO:0017147">
    <property type="term" value="F:Wnt-protein binding"/>
    <property type="evidence" value="ECO:0000318"/>
    <property type="project" value="GO_Central"/>
</dbReference>
<dbReference type="GO" id="GO:0030509">
    <property type="term" value="P:BMP signaling pathway"/>
    <property type="evidence" value="ECO:0007669"/>
    <property type="project" value="Ensembl"/>
</dbReference>
<dbReference type="GO" id="GO:0001569">
    <property type="term" value="P:branching involved in blood vessel morphogenesis"/>
    <property type="evidence" value="ECO:0000250"/>
    <property type="project" value="BHF-UCL"/>
</dbReference>
<dbReference type="GO" id="GO:0060070">
    <property type="term" value="P:canonical Wnt signaling pathway"/>
    <property type="evidence" value="ECO:0000250"/>
    <property type="project" value="BHF-UCL"/>
</dbReference>
<dbReference type="GO" id="GO:0003214">
    <property type="term" value="P:cardiac left ventricle morphogenesis"/>
    <property type="evidence" value="ECO:0000315"/>
    <property type="project" value="BHF-UCL"/>
</dbReference>
<dbReference type="GO" id="GO:0010659">
    <property type="term" value="P:cardiac muscle cell apoptotic process"/>
    <property type="evidence" value="ECO:0007669"/>
    <property type="project" value="Ensembl"/>
</dbReference>
<dbReference type="GO" id="GO:0007267">
    <property type="term" value="P:cell-cell signaling"/>
    <property type="evidence" value="ECO:0000250"/>
    <property type="project" value="BHF-UCL"/>
</dbReference>
<dbReference type="GO" id="GO:0071481">
    <property type="term" value="P:cellular response to X-ray"/>
    <property type="evidence" value="ECO:0007669"/>
    <property type="project" value="Ensembl"/>
</dbReference>
<dbReference type="GO" id="GO:0002063">
    <property type="term" value="P:chondrocyte development"/>
    <property type="evidence" value="ECO:0007669"/>
    <property type="project" value="Ensembl"/>
</dbReference>
<dbReference type="GO" id="GO:0030199">
    <property type="term" value="P:collagen fibril organization"/>
    <property type="evidence" value="ECO:0007669"/>
    <property type="project" value="Ensembl"/>
</dbReference>
<dbReference type="GO" id="GO:0060028">
    <property type="term" value="P:convergent extension involved in axis elongation"/>
    <property type="evidence" value="ECO:0007669"/>
    <property type="project" value="Ensembl"/>
</dbReference>
<dbReference type="GO" id="GO:0048546">
    <property type="term" value="P:digestive tract morphogenesis"/>
    <property type="evidence" value="ECO:0007669"/>
    <property type="project" value="Ensembl"/>
</dbReference>
<dbReference type="GO" id="GO:0042733">
    <property type="term" value="P:embryonic digit morphogenesis"/>
    <property type="evidence" value="ECO:0007669"/>
    <property type="project" value="Ensembl"/>
</dbReference>
<dbReference type="GO" id="GO:0071425">
    <property type="term" value="P:hematopoietic stem cell proliferation"/>
    <property type="evidence" value="ECO:0000250"/>
    <property type="project" value="UniProtKB"/>
</dbReference>
<dbReference type="GO" id="GO:0008584">
    <property type="term" value="P:male gonad development"/>
    <property type="evidence" value="ECO:0007669"/>
    <property type="project" value="Ensembl"/>
</dbReference>
<dbReference type="GO" id="GO:0007501">
    <property type="term" value="P:mesodermal cell fate specification"/>
    <property type="evidence" value="ECO:0007669"/>
    <property type="project" value="Ensembl"/>
</dbReference>
<dbReference type="GO" id="GO:0030514">
    <property type="term" value="P:negative regulation of BMP signaling pathway"/>
    <property type="evidence" value="ECO:0007669"/>
    <property type="project" value="Ensembl"/>
</dbReference>
<dbReference type="GO" id="GO:0090090">
    <property type="term" value="P:negative regulation of canonical Wnt signaling pathway"/>
    <property type="evidence" value="ECO:0000314"/>
    <property type="project" value="UniProtKB"/>
</dbReference>
<dbReference type="GO" id="GO:0010667">
    <property type="term" value="P:negative regulation of cardiac muscle cell apoptotic process"/>
    <property type="evidence" value="ECO:0007669"/>
    <property type="project" value="Ensembl"/>
</dbReference>
<dbReference type="GO" id="GO:0030308">
    <property type="term" value="P:negative regulation of cell growth"/>
    <property type="evidence" value="ECO:0000314"/>
    <property type="project" value="UniProtKB"/>
</dbReference>
<dbReference type="GO" id="GO:0030336">
    <property type="term" value="P:negative regulation of cell migration"/>
    <property type="evidence" value="ECO:0000250"/>
    <property type="project" value="UniProtKB"/>
</dbReference>
<dbReference type="GO" id="GO:0008285">
    <property type="term" value="P:negative regulation of cell population proliferation"/>
    <property type="evidence" value="ECO:0000314"/>
    <property type="project" value="UniProtKB"/>
</dbReference>
<dbReference type="GO" id="GO:0061185">
    <property type="term" value="P:negative regulation of dermatome development"/>
    <property type="evidence" value="ECO:0000250"/>
    <property type="project" value="BHF-UCL"/>
</dbReference>
<dbReference type="GO" id="GO:0045892">
    <property type="term" value="P:negative regulation of DNA-templated transcription"/>
    <property type="evidence" value="ECO:0000314"/>
    <property type="project" value="UniProtKB"/>
</dbReference>
<dbReference type="GO" id="GO:0050680">
    <property type="term" value="P:negative regulation of epithelial cell proliferation"/>
    <property type="evidence" value="ECO:0000314"/>
    <property type="project" value="UniProtKB"/>
</dbReference>
<dbReference type="GO" id="GO:0010719">
    <property type="term" value="P:negative regulation of epithelial to mesenchymal transition"/>
    <property type="evidence" value="ECO:0000314"/>
    <property type="project" value="UniProtKB"/>
</dbReference>
<dbReference type="GO" id="GO:1902042">
    <property type="term" value="P:negative regulation of extrinsic apoptotic signaling pathway via death domain receptors"/>
    <property type="evidence" value="ECO:0007669"/>
    <property type="project" value="Ensembl"/>
</dbReference>
<dbReference type="GO" id="GO:0010629">
    <property type="term" value="P:negative regulation of gene expression"/>
    <property type="evidence" value="ECO:0000250"/>
    <property type="project" value="UniProtKB"/>
</dbReference>
<dbReference type="GO" id="GO:1902230">
    <property type="term" value="P:negative regulation of intrinsic apoptotic signaling pathway in response to DNA damage"/>
    <property type="evidence" value="ECO:0000250"/>
    <property type="project" value="BHF-UCL"/>
</dbReference>
<dbReference type="GO" id="GO:0042662">
    <property type="term" value="P:negative regulation of mesodermal cell fate specification"/>
    <property type="evidence" value="ECO:0007669"/>
    <property type="project" value="Ensembl"/>
</dbReference>
<dbReference type="GO" id="GO:0050732">
    <property type="term" value="P:negative regulation of peptidyl-tyrosine phosphorylation"/>
    <property type="evidence" value="ECO:0000250"/>
    <property type="project" value="UniProtKB"/>
</dbReference>
<dbReference type="GO" id="GO:0030178">
    <property type="term" value="P:negative regulation of Wnt signaling pathway"/>
    <property type="evidence" value="ECO:0000314"/>
    <property type="project" value="UniProtKB"/>
</dbReference>
<dbReference type="GO" id="GO:0001843">
    <property type="term" value="P:neural tube closure"/>
    <property type="evidence" value="ECO:0007669"/>
    <property type="project" value="Ensembl"/>
</dbReference>
<dbReference type="GO" id="GO:0035567">
    <property type="term" value="P:non-canonical Wnt signaling pathway"/>
    <property type="evidence" value="ECO:0000318"/>
    <property type="project" value="GO_Central"/>
</dbReference>
<dbReference type="GO" id="GO:0003151">
    <property type="term" value="P:outflow tract morphogenesis"/>
    <property type="evidence" value="ECO:0000315"/>
    <property type="project" value="BHF-UCL"/>
</dbReference>
<dbReference type="GO" id="GO:0045766">
    <property type="term" value="P:positive regulation of angiogenesis"/>
    <property type="evidence" value="ECO:0000250"/>
    <property type="project" value="BHF-UCL"/>
</dbReference>
<dbReference type="GO" id="GO:0043065">
    <property type="term" value="P:positive regulation of apoptotic process"/>
    <property type="evidence" value="ECO:0000315"/>
    <property type="project" value="BHF-UCL"/>
</dbReference>
<dbReference type="GO" id="GO:0090263">
    <property type="term" value="P:positive regulation of canonical Wnt signaling pathway"/>
    <property type="evidence" value="ECO:0000250"/>
    <property type="project" value="BHF-UCL"/>
</dbReference>
<dbReference type="GO" id="GO:0033630">
    <property type="term" value="P:positive regulation of cell adhesion mediated by integrin"/>
    <property type="evidence" value="ECO:0000250"/>
    <property type="project" value="BHF-UCL"/>
</dbReference>
<dbReference type="GO" id="GO:0030307">
    <property type="term" value="P:positive regulation of cell growth"/>
    <property type="evidence" value="ECO:0000250"/>
    <property type="project" value="UniProtKB"/>
</dbReference>
<dbReference type="GO" id="GO:0008284">
    <property type="term" value="P:positive regulation of cell population proliferation"/>
    <property type="evidence" value="ECO:0000314"/>
    <property type="project" value="UniProtKB"/>
</dbReference>
<dbReference type="GO" id="GO:0045600">
    <property type="term" value="P:positive regulation of fat cell differentiation"/>
    <property type="evidence" value="ECO:0000314"/>
    <property type="project" value="MGI"/>
</dbReference>
<dbReference type="GO" id="GO:0045669">
    <property type="term" value="P:positive regulation of osteoblast differentiation"/>
    <property type="evidence" value="ECO:0007669"/>
    <property type="project" value="Ensembl"/>
</dbReference>
<dbReference type="GO" id="GO:0045944">
    <property type="term" value="P:positive regulation of transcription by RNA polymerase II"/>
    <property type="evidence" value="ECO:0000250"/>
    <property type="project" value="BHF-UCL"/>
</dbReference>
<dbReference type="GO" id="GO:0036342">
    <property type="term" value="P:post-anal tail morphogenesis"/>
    <property type="evidence" value="ECO:0007669"/>
    <property type="project" value="Ensembl"/>
</dbReference>
<dbReference type="GO" id="GO:0090175">
    <property type="term" value="P:regulation of establishment of planar polarity"/>
    <property type="evidence" value="ECO:0007669"/>
    <property type="project" value="Ensembl"/>
</dbReference>
<dbReference type="GO" id="GO:1904956">
    <property type="term" value="P:regulation of midbrain dopaminergic neuron differentiation"/>
    <property type="evidence" value="ECO:0007669"/>
    <property type="project" value="Ensembl"/>
</dbReference>
<dbReference type="GO" id="GO:0010975">
    <property type="term" value="P:regulation of neuron projection development"/>
    <property type="evidence" value="ECO:0007669"/>
    <property type="project" value="Ensembl"/>
</dbReference>
<dbReference type="GO" id="GO:2000035">
    <property type="term" value="P:regulation of stem cell division"/>
    <property type="evidence" value="ECO:0000250"/>
    <property type="project" value="UniProtKB"/>
</dbReference>
<dbReference type="GO" id="GO:0007584">
    <property type="term" value="P:response to nutrient"/>
    <property type="evidence" value="ECO:0007669"/>
    <property type="project" value="Ensembl"/>
</dbReference>
<dbReference type="GO" id="GO:0009410">
    <property type="term" value="P:response to xenobiotic stimulus"/>
    <property type="evidence" value="ECO:0007669"/>
    <property type="project" value="Ensembl"/>
</dbReference>
<dbReference type="GO" id="GO:0061056">
    <property type="term" value="P:sclerotome development"/>
    <property type="evidence" value="ECO:0000250"/>
    <property type="project" value="BHF-UCL"/>
</dbReference>
<dbReference type="GO" id="GO:0048866">
    <property type="term" value="P:stem cell fate specification"/>
    <property type="evidence" value="ECO:0007669"/>
    <property type="project" value="Ensembl"/>
</dbReference>
<dbReference type="GO" id="GO:0090244">
    <property type="term" value="P:Wnt signaling pathway involved in somitogenesis"/>
    <property type="evidence" value="ECO:0007669"/>
    <property type="project" value="Ensembl"/>
</dbReference>
<dbReference type="CDD" id="cd07446">
    <property type="entry name" value="CRD_SFRP2"/>
    <property type="match status" value="1"/>
</dbReference>
<dbReference type="CDD" id="cd03580">
    <property type="entry name" value="NTR_Sfrp1_like"/>
    <property type="match status" value="1"/>
</dbReference>
<dbReference type="FunFam" id="2.40.50.120:FF:000006">
    <property type="entry name" value="Secreted frizzled-related protein 2"/>
    <property type="match status" value="1"/>
</dbReference>
<dbReference type="FunFam" id="1.10.2000.10:FF:000001">
    <property type="entry name" value="secreted frizzled-related protein 2"/>
    <property type="match status" value="1"/>
</dbReference>
<dbReference type="Gene3D" id="2.40.50.120">
    <property type="match status" value="1"/>
</dbReference>
<dbReference type="Gene3D" id="1.10.2000.10">
    <property type="entry name" value="Frizzled cysteine-rich domain"/>
    <property type="match status" value="1"/>
</dbReference>
<dbReference type="InterPro" id="IPR015526">
    <property type="entry name" value="Frizzled/SFRP"/>
</dbReference>
<dbReference type="InterPro" id="IPR020067">
    <property type="entry name" value="Frizzled_dom"/>
</dbReference>
<dbReference type="InterPro" id="IPR036790">
    <property type="entry name" value="Frizzled_dom_sf"/>
</dbReference>
<dbReference type="InterPro" id="IPR001134">
    <property type="entry name" value="Netrin_domain"/>
</dbReference>
<dbReference type="InterPro" id="IPR018933">
    <property type="entry name" value="Netrin_module_non-TIMP"/>
</dbReference>
<dbReference type="InterPro" id="IPR041764">
    <property type="entry name" value="SFRP2_CRD"/>
</dbReference>
<dbReference type="InterPro" id="IPR008993">
    <property type="entry name" value="TIMP-like_OB-fold"/>
</dbReference>
<dbReference type="PANTHER" id="PTHR11309">
    <property type="entry name" value="FRIZZLED"/>
    <property type="match status" value="1"/>
</dbReference>
<dbReference type="PANTHER" id="PTHR11309:SF45">
    <property type="entry name" value="SECRETED FRIZZLED-RELATED PROTEIN 2"/>
    <property type="match status" value="1"/>
</dbReference>
<dbReference type="Pfam" id="PF01392">
    <property type="entry name" value="Fz"/>
    <property type="match status" value="1"/>
</dbReference>
<dbReference type="Pfam" id="PF01759">
    <property type="entry name" value="NTR"/>
    <property type="match status" value="1"/>
</dbReference>
<dbReference type="SMART" id="SM00643">
    <property type="entry name" value="C345C"/>
    <property type="match status" value="1"/>
</dbReference>
<dbReference type="SMART" id="SM00063">
    <property type="entry name" value="FRI"/>
    <property type="match status" value="1"/>
</dbReference>
<dbReference type="SUPFAM" id="SSF63501">
    <property type="entry name" value="Frizzled cysteine-rich domain"/>
    <property type="match status" value="1"/>
</dbReference>
<dbReference type="SUPFAM" id="SSF50242">
    <property type="entry name" value="TIMP-like"/>
    <property type="match status" value="1"/>
</dbReference>
<dbReference type="PROSITE" id="PS50038">
    <property type="entry name" value="FZ"/>
    <property type="match status" value="1"/>
</dbReference>
<dbReference type="PROSITE" id="PS50189">
    <property type="entry name" value="NTR"/>
    <property type="match status" value="1"/>
</dbReference>
<organism>
    <name type="scientific">Homo sapiens</name>
    <name type="common">Human</name>
    <dbReference type="NCBI Taxonomy" id="9606"/>
    <lineage>
        <taxon>Eukaryota</taxon>
        <taxon>Metazoa</taxon>
        <taxon>Chordata</taxon>
        <taxon>Craniata</taxon>
        <taxon>Vertebrata</taxon>
        <taxon>Euteleostomi</taxon>
        <taxon>Mammalia</taxon>
        <taxon>Eutheria</taxon>
        <taxon>Euarchontoglires</taxon>
        <taxon>Primates</taxon>
        <taxon>Haplorrhini</taxon>
        <taxon>Catarrhini</taxon>
        <taxon>Hominidae</taxon>
        <taxon>Homo</taxon>
    </lineage>
</organism>
<gene>
    <name type="primary">SFRP2</name>
    <name type="synonym">FRP2</name>
    <name type="synonym">SARP1</name>
    <name type="ORF">FKSG12</name>
    <name type="ORF">UNQ361/PRO697</name>
</gene>
<evidence type="ECO:0000250" key="1"/>
<evidence type="ECO:0000255" key="2">
    <source>
        <dbReference type="PROSITE-ProRule" id="PRU00090"/>
    </source>
</evidence>
<evidence type="ECO:0000255" key="3">
    <source>
        <dbReference type="PROSITE-ProRule" id="PRU00295"/>
    </source>
</evidence>
<evidence type="ECO:0000269" key="4">
    <source>
    </source>
</evidence>
<evidence type="ECO:0000269" key="5">
    <source>
    </source>
</evidence>
<evidence type="ECO:0000269" key="6">
    <source>
    </source>
</evidence>
<evidence type="ECO:0000269" key="7">
    <source>
    </source>
</evidence>
<evidence type="ECO:0000269" key="8">
    <source>
    </source>
</evidence>
<evidence type="ECO:0000305" key="9"/>
<reference key="1">
    <citation type="journal article" date="1998" name="Biochem. Biophys. Res. Commun.">
        <title>Tissue restricted expression of two human Frzbs in preadipocytes and pancreas.</title>
        <authorList>
            <person name="Hu E."/>
            <person name="Zhu Y."/>
            <person name="Fredrickson T."/>
            <person name="Barnes M."/>
            <person name="Kelsell D."/>
            <person name="Beeley L."/>
            <person name="Brooks D."/>
        </authorList>
    </citation>
    <scope>NUCLEOTIDE SEQUENCE [MRNA]</scope>
    <scope>TISSUE SPECIFICITY</scope>
</reference>
<reference key="2">
    <citation type="submission" date="2000-10" db="EMBL/GenBank/DDBJ databases">
        <title>Characterization of FKSG12, a novel protein related to pancreas tumor.</title>
        <authorList>
            <person name="Wang Y.-G."/>
        </authorList>
    </citation>
    <scope>NUCLEOTIDE SEQUENCE [MRNA]</scope>
</reference>
<reference key="3">
    <citation type="journal article" date="2003" name="Genome Res.">
        <title>The secreted protein discovery initiative (SPDI), a large-scale effort to identify novel human secreted and transmembrane proteins: a bioinformatics assessment.</title>
        <authorList>
            <person name="Clark H.F."/>
            <person name="Gurney A.L."/>
            <person name="Abaya E."/>
            <person name="Baker K."/>
            <person name="Baldwin D.T."/>
            <person name="Brush J."/>
            <person name="Chen J."/>
            <person name="Chow B."/>
            <person name="Chui C."/>
            <person name="Crowley C."/>
            <person name="Currell B."/>
            <person name="Deuel B."/>
            <person name="Dowd P."/>
            <person name="Eaton D."/>
            <person name="Foster J.S."/>
            <person name="Grimaldi C."/>
            <person name="Gu Q."/>
            <person name="Hass P.E."/>
            <person name="Heldens S."/>
            <person name="Huang A."/>
            <person name="Kim H.S."/>
            <person name="Klimowski L."/>
            <person name="Jin Y."/>
            <person name="Johnson S."/>
            <person name="Lee J."/>
            <person name="Lewis L."/>
            <person name="Liao D."/>
            <person name="Mark M.R."/>
            <person name="Robbie E."/>
            <person name="Sanchez C."/>
            <person name="Schoenfeld J."/>
            <person name="Seshagiri S."/>
            <person name="Simmons L."/>
            <person name="Singh J."/>
            <person name="Smith V."/>
            <person name="Stinson J."/>
            <person name="Vagts A."/>
            <person name="Vandlen R.L."/>
            <person name="Watanabe C."/>
            <person name="Wieand D."/>
            <person name="Woods K."/>
            <person name="Xie M.-H."/>
            <person name="Yansura D.G."/>
            <person name="Yi S."/>
            <person name="Yu G."/>
            <person name="Yuan J."/>
            <person name="Zhang M."/>
            <person name="Zhang Z."/>
            <person name="Goddard A.D."/>
            <person name="Wood W.I."/>
            <person name="Godowski P.J."/>
            <person name="Gray A.M."/>
        </authorList>
    </citation>
    <scope>NUCLEOTIDE SEQUENCE [LARGE SCALE MRNA]</scope>
    <scope>VARIANT VAL-45</scope>
</reference>
<reference key="4">
    <citation type="journal article" date="2005" name="DNA Res.">
        <title>Signal sequence and keyword trap in silico for selection of full-length human cDNAs encoding secretion or membrane proteins from oligo-capped cDNA libraries.</title>
        <authorList>
            <person name="Otsuki T."/>
            <person name="Ota T."/>
            <person name="Nishikawa T."/>
            <person name="Hayashi K."/>
            <person name="Suzuki Y."/>
            <person name="Yamamoto J."/>
            <person name="Wakamatsu A."/>
            <person name="Kimura K."/>
            <person name="Sakamoto K."/>
            <person name="Hatano N."/>
            <person name="Kawai Y."/>
            <person name="Ishii S."/>
            <person name="Saito K."/>
            <person name="Kojima S."/>
            <person name="Sugiyama T."/>
            <person name="Ono T."/>
            <person name="Okano K."/>
            <person name="Yoshikawa Y."/>
            <person name="Aotsuka S."/>
            <person name="Sasaki N."/>
            <person name="Hattori A."/>
            <person name="Okumura K."/>
            <person name="Nagai K."/>
            <person name="Sugano S."/>
            <person name="Isogai T."/>
        </authorList>
    </citation>
    <scope>NUCLEOTIDE SEQUENCE [LARGE SCALE MRNA]</scope>
</reference>
<reference key="5">
    <citation type="submission" date="2005-09" db="EMBL/GenBank/DDBJ databases">
        <authorList>
            <person name="Mural R.J."/>
            <person name="Istrail S."/>
            <person name="Sutton G.G."/>
            <person name="Florea L."/>
            <person name="Halpern A.L."/>
            <person name="Mobarry C.M."/>
            <person name="Lippert R."/>
            <person name="Walenz B."/>
            <person name="Shatkay H."/>
            <person name="Dew I."/>
            <person name="Miller J.R."/>
            <person name="Flanigan M.J."/>
            <person name="Edwards N.J."/>
            <person name="Bolanos R."/>
            <person name="Fasulo D."/>
            <person name="Halldorsson B.V."/>
            <person name="Hannenhalli S."/>
            <person name="Turner R."/>
            <person name="Yooseph S."/>
            <person name="Lu F."/>
            <person name="Nusskern D.R."/>
            <person name="Shue B.C."/>
            <person name="Zheng X.H."/>
            <person name="Zhong F."/>
            <person name="Delcher A.L."/>
            <person name="Huson D.H."/>
            <person name="Kravitz S.A."/>
            <person name="Mouchard L."/>
            <person name="Reinert K."/>
            <person name="Remington K.A."/>
            <person name="Clark A.G."/>
            <person name="Waterman M.S."/>
            <person name="Eichler E.E."/>
            <person name="Adams M.D."/>
            <person name="Hunkapiller M.W."/>
            <person name="Myers E.W."/>
            <person name="Venter J.C."/>
        </authorList>
    </citation>
    <scope>NUCLEOTIDE SEQUENCE [LARGE SCALE GENOMIC DNA]</scope>
</reference>
<reference key="6">
    <citation type="journal article" date="2004" name="Genome Res.">
        <title>The status, quality, and expansion of the NIH full-length cDNA project: the Mammalian Gene Collection (MGC).</title>
        <authorList>
            <consortium name="The MGC Project Team"/>
        </authorList>
    </citation>
    <scope>NUCLEOTIDE SEQUENCE [LARGE SCALE MRNA]</scope>
    <scope>VARIANT VAL-45</scope>
    <source>
        <tissue>Eye</tissue>
    </source>
</reference>
<reference key="7">
    <citation type="journal article" date="1997" name="Proc. Natl. Acad. Sci. U.S.A.">
        <title>SARPs: a family of secreted apoptosis-related proteins.</title>
        <authorList>
            <person name="Melkonyan H.S."/>
            <person name="Chang W.C."/>
            <person name="Shapiro J.P."/>
            <person name="Mahadevappa M."/>
            <person name="Fitzpatrick P.A."/>
            <person name="Kiefer M.C."/>
            <person name="Tomei L.D."/>
            <person name="Umansky S.R."/>
        </authorList>
    </citation>
    <scope>NUCLEOTIDE SEQUENCE [MRNA] OF 1-208</scope>
    <scope>TISSUE SPECIFICITY</scope>
</reference>
<reference key="8">
    <citation type="journal article" date="2004" name="Protein Sci.">
        <title>Signal peptide prediction based on analysis of experimentally verified cleavage sites.</title>
        <authorList>
            <person name="Zhang Z."/>
            <person name="Henzel W.J."/>
        </authorList>
    </citation>
    <scope>PROTEIN SEQUENCE OF 25-39</scope>
</reference>
<comment type="function">
    <text>Soluble frizzled-related proteins (sFRPS) function as modulators of Wnt signaling through direct interaction with Wnts. They have a role in regulating cell growth and differentiation in specific cell types. SFRP2 may be important for eye retinal development and for myogenesis.</text>
</comment>
<comment type="subcellular location">
    <subcellularLocation>
        <location evidence="1">Secreted</location>
    </subcellularLocation>
</comment>
<comment type="tissue specificity">
    <text evidence="7 8">Expressed in adipose tissue, heart, brain, skeletal muscle, pancreas, thymus, prostate, testis, ovary, small intestine and colon. Highest levels in adipose tissue, small intestine and colon.</text>
</comment>
<comment type="domain">
    <text evidence="1">The FZ domain is involved in binding with Wnt ligands.</text>
</comment>
<comment type="similarity">
    <text evidence="9">Belongs to the secreted frizzled-related protein (sFRP) family.</text>
</comment>